<dbReference type="EMBL" id="CP000075">
    <property type="protein sequence ID" value="AAY39553.1"/>
    <property type="molecule type" value="Genomic_DNA"/>
</dbReference>
<dbReference type="RefSeq" id="WP_003317096.1">
    <property type="nucleotide sequence ID" value="NC_007005.1"/>
</dbReference>
<dbReference type="RefSeq" id="YP_237591.1">
    <property type="nucleotide sequence ID" value="NC_007005.1"/>
</dbReference>
<dbReference type="SMR" id="Q4ZMR9"/>
<dbReference type="STRING" id="205918.Psyr_4523"/>
<dbReference type="GeneID" id="77280348"/>
<dbReference type="KEGG" id="psb:Psyr_4523"/>
<dbReference type="PATRIC" id="fig|205918.7.peg.4661"/>
<dbReference type="eggNOG" id="COG0203">
    <property type="taxonomic scope" value="Bacteria"/>
</dbReference>
<dbReference type="HOGENOM" id="CLU_074407_2_0_6"/>
<dbReference type="OrthoDB" id="9809073at2"/>
<dbReference type="Proteomes" id="UP000000426">
    <property type="component" value="Chromosome"/>
</dbReference>
<dbReference type="GO" id="GO:0022625">
    <property type="term" value="C:cytosolic large ribosomal subunit"/>
    <property type="evidence" value="ECO:0007669"/>
    <property type="project" value="TreeGrafter"/>
</dbReference>
<dbReference type="GO" id="GO:0003735">
    <property type="term" value="F:structural constituent of ribosome"/>
    <property type="evidence" value="ECO:0007669"/>
    <property type="project" value="InterPro"/>
</dbReference>
<dbReference type="GO" id="GO:0006412">
    <property type="term" value="P:translation"/>
    <property type="evidence" value="ECO:0007669"/>
    <property type="project" value="UniProtKB-UniRule"/>
</dbReference>
<dbReference type="FunFam" id="3.90.1030.10:FF:000001">
    <property type="entry name" value="50S ribosomal protein L17"/>
    <property type="match status" value="1"/>
</dbReference>
<dbReference type="Gene3D" id="3.90.1030.10">
    <property type="entry name" value="Ribosomal protein L17"/>
    <property type="match status" value="1"/>
</dbReference>
<dbReference type="HAMAP" id="MF_01368">
    <property type="entry name" value="Ribosomal_bL17"/>
    <property type="match status" value="1"/>
</dbReference>
<dbReference type="InterPro" id="IPR000456">
    <property type="entry name" value="Ribosomal_bL17"/>
</dbReference>
<dbReference type="InterPro" id="IPR047859">
    <property type="entry name" value="Ribosomal_bL17_CS"/>
</dbReference>
<dbReference type="InterPro" id="IPR036373">
    <property type="entry name" value="Ribosomal_bL17_sf"/>
</dbReference>
<dbReference type="NCBIfam" id="TIGR00059">
    <property type="entry name" value="L17"/>
    <property type="match status" value="1"/>
</dbReference>
<dbReference type="PANTHER" id="PTHR14413:SF16">
    <property type="entry name" value="LARGE RIBOSOMAL SUBUNIT PROTEIN BL17M"/>
    <property type="match status" value="1"/>
</dbReference>
<dbReference type="PANTHER" id="PTHR14413">
    <property type="entry name" value="RIBOSOMAL PROTEIN L17"/>
    <property type="match status" value="1"/>
</dbReference>
<dbReference type="Pfam" id="PF01196">
    <property type="entry name" value="Ribosomal_L17"/>
    <property type="match status" value="1"/>
</dbReference>
<dbReference type="SUPFAM" id="SSF64263">
    <property type="entry name" value="Prokaryotic ribosomal protein L17"/>
    <property type="match status" value="1"/>
</dbReference>
<dbReference type="PROSITE" id="PS01167">
    <property type="entry name" value="RIBOSOMAL_L17"/>
    <property type="match status" value="1"/>
</dbReference>
<sequence>MRHRKSGRHLSRTSSHRKAMFQNMAVSLFEHELIKTTLPKAKELRRVAEPLITLAKEDSVANRRLAFDRTRSKEIVGKLFNDLGKRYATRQGGYLRILKCGFRAGDNAPMAYVELVDRPIGGSVEAAE</sequence>
<accession>Q4ZMR9</accession>
<organism>
    <name type="scientific">Pseudomonas syringae pv. syringae (strain B728a)</name>
    <dbReference type="NCBI Taxonomy" id="205918"/>
    <lineage>
        <taxon>Bacteria</taxon>
        <taxon>Pseudomonadati</taxon>
        <taxon>Pseudomonadota</taxon>
        <taxon>Gammaproteobacteria</taxon>
        <taxon>Pseudomonadales</taxon>
        <taxon>Pseudomonadaceae</taxon>
        <taxon>Pseudomonas</taxon>
        <taxon>Pseudomonas syringae</taxon>
    </lineage>
</organism>
<comment type="subunit">
    <text evidence="1">Part of the 50S ribosomal subunit. Contacts protein L32.</text>
</comment>
<comment type="similarity">
    <text evidence="1">Belongs to the bacterial ribosomal protein bL17 family.</text>
</comment>
<reference key="1">
    <citation type="journal article" date="2005" name="Proc. Natl. Acad. Sci. U.S.A.">
        <title>Comparison of the complete genome sequences of Pseudomonas syringae pv. syringae B728a and pv. tomato DC3000.</title>
        <authorList>
            <person name="Feil H."/>
            <person name="Feil W.S."/>
            <person name="Chain P."/>
            <person name="Larimer F."/>
            <person name="Dibartolo G."/>
            <person name="Copeland A."/>
            <person name="Lykidis A."/>
            <person name="Trong S."/>
            <person name="Nolan M."/>
            <person name="Goltsman E."/>
            <person name="Thiel J."/>
            <person name="Malfatti S."/>
            <person name="Loper J.E."/>
            <person name="Lapidus A."/>
            <person name="Detter J.C."/>
            <person name="Land M."/>
            <person name="Richardson P.M."/>
            <person name="Kyrpides N.C."/>
            <person name="Ivanova N."/>
            <person name="Lindow S.E."/>
        </authorList>
    </citation>
    <scope>NUCLEOTIDE SEQUENCE [LARGE SCALE GENOMIC DNA]</scope>
    <source>
        <strain>B728a</strain>
    </source>
</reference>
<keyword id="KW-0687">Ribonucleoprotein</keyword>
<keyword id="KW-0689">Ribosomal protein</keyword>
<protein>
    <recommendedName>
        <fullName evidence="1">Large ribosomal subunit protein bL17</fullName>
    </recommendedName>
    <alternativeName>
        <fullName evidence="2">50S ribosomal protein L17</fullName>
    </alternativeName>
</protein>
<feature type="chain" id="PRO_0000267918" description="Large ribosomal subunit protein bL17">
    <location>
        <begin position="1"/>
        <end position="128"/>
    </location>
</feature>
<name>RL17_PSEU2</name>
<evidence type="ECO:0000255" key="1">
    <source>
        <dbReference type="HAMAP-Rule" id="MF_01368"/>
    </source>
</evidence>
<evidence type="ECO:0000305" key="2"/>
<proteinExistence type="inferred from homology"/>
<gene>
    <name evidence="1" type="primary">rplQ</name>
    <name type="ordered locus">Psyr_4523</name>
</gene>